<sequence length="4579" mass="521126">METKENRWVPVTVLPGCVGCRTVAALASWTVRDVKERIFAETGFPVSEQRLWRGGRELSDWIKIGDLTSKNCHLFVNLQSKGLKGGGRFGQTTPPLVDFLKDILRRYPEGGQILKELIQNAEDAGATEVKFLYDETQYGTETLWSKDMAPYQGPALYVYNNAVFTPEDWHGIQEIARSRKKDDPLKVGRFGIGFNSVYHITDVPCIFSGDQIGMLDPHQTLFGPHESGQCWNLKDDSKEISELSDQFAPFVGIFGSTKETFINGNFPGTFFRFPLRLQPSQLSSNLYNKQKVLELFESFRADADTVLLFLKSVQDVSLYVREADGTEKLVFRVTSSESKALKHERPNSIKILGTAISNYCKKTPSNNITCVTYHVNIVLEEESTKDAQKTSWLVCNSVGGRGISSKLDSLADELKFVPIIGIAMPLSSRDDEAKGATSDFSGKAFCFLPLPPGEESSTGLPVHISGFFGLTDNRRSIKWRELDQWRDPAALWNEFLVMNVVPKAYATLILDSIKRLEMEKSSDFPLSVDVIYKLWPEASKVKVHWQPVLEPLFSELLQNAVIYSISCDWVRLEQVYFSELDENLEYTKTVLNYLQSSGKQIAKVPGNVDAAVQLTAASGTTPVRKVTPAWVRQVLRKCAHLGCAEEKLHLLEFVLSDQAYSELLGLELLPLQNGNFVPFSSSVSDQDVIYITSAEYPRSLFPSLEGRFILDNLKPHLVAALKEAAQTRGRPCTQLQLLNPERFARLIKEVMNTFWPGRELIVQWYPFDENRNHPSVSWLKMVWKNLYIHFSEDLTLFDEMPLIPRTILEEGQTCVELIRLRIPSLVILDDESEAQLPEFLADIVQKLGGFVLKKLDASIQHPLIKKYIHSPLPSAVLQIMEKMPLQKLCNQITSLLPTHKDALRKFLASLTDSSEKEKRIIQELAIFKRINHSSDQGISSYTKLKGCKVLHHTAKLPADLRLSISVIDSSDEATIRLANMLKIEQLKTTSCLKLVLKDIENAFYSHEEVTQLMLWVLENLSSLKNENPNVLEWLTPLKFIQISQEQMVSAGELFDPDIEVLKDLFCNEEGTYFPPSVFTSPDILHSLRQIGLKNEASLKEKDVVQVAKKIEALQVGACPDQDVLLKKAKTLLLVLNKNHTLLQSSEGKMTLKKIKWVPACKERPPNYPGSLVWKGDLCNLCAPPDMCDVGHAILIGSSLPLVESIHVNLEKALGIFTKPSLSAVLKHFKIVVDWYSSKTFSDEDYYQFQHILLEIYGFMHDHLNEGKDSFRALKFPWVWTGKKFCPLAQAVIKPIHDLDLQPYLHNVPKTMAKFHQLFKVCGSIEELTSDHISMVIQKIYLKSDQDLSEQESKQNLHLMLNIIRWLYSNQIPASPNTPVPIHHSKNPSKLIMKPIHECCYCDIKVDDLNDLLEDSVEPIILVHEDIPMKTAEWLKVPCLSTRLINPENMGFEQSGQREPLTVRIKNILEEYPSVSDIFKELLQNADDANATECSFLIDMRRNMDIRENLLDPGMAACHGPALWSFNNSQFSDSDFVNITRLGESLKRGEVDKVGKFGLGFNSVYHITDIPIIMSREFMIMFDPNINHISKHIKDKSNPGIKINWSKQQKRLRKFPNQFKPFIDVFGCQLPLTVEAPYSYNGTLFRLSFRTQQEAKVSEVSSTCYNTADIYSLVDEFSLCGHRLIIFTQSVKSMYLKYLKIEETNPSLAQDTVIIKKKSCSSKALNTPVLSVLKEAAKLMKTCSSSNKKLPSDEPKSSCILQITVEEFHHVFRRIADLQSPLFRGPDDDPAALFEMAKSGQSKKPSDELSQKTVECTTWLLCTCMDTGEALKFSLSESGRRLGLVPCGAVGVQLSEIQDQKWTVKPHIGEVFCYLPLRIKTGLPVHINGCFAVTSNRKEIWKTDTKGRWNTTFMRHVIVKAYLQVLSVLRDLATSGELMDYTYYAVWPDPDLVHDDFSVICQGFYEDIAHGKGKELTKVFSDGSTWVSMKNVRFLDDSILKRRDVGSAAFKIFLKYLKKTGSKNLCAVELPSSVKLGFEEAGCKQILLENTFSEKQFFSEVFFPNIQEIEAELRDPLMIFVLNEKVDEFSGVLRVTPCIPCSLEGHPLVLPSRLIHPEGRVAKLFDIKDGRFPYGSTQDYLNPIILIKLVQLGMAKDDILWDDMLERAVSVAEINKSDHVAACLRSSILLSLIDEKLKIRDPRAKDFAAKYQTIRFLPFLTKPAGFSLDWKGNSFKPETMFAATDLYTAEHQDIVCLLQPILNENSHSFRGCGSVSLAVKEFLGLLKKPTVDLVINQLKEVAKSVDDGITLYQENITNACYKYLHEALMQNEITKMSIIDKLKPFSFILVENAYVDSEKVSFHLNFEAAPYLYQLPNKYKNNFRELFETVGVRQSCTVEDFALVLESIDQERGTKQITEENFQLCRRIISEGIWSLIREKKQEFCEKNYGKILLPDTNLMLLPAKSLCYNDCPWIKVKDTTVKYCHADIPREVAVKLGAVPKRHKALERYASNVCFTTLGTEFGQKEKLTSRIKSILNAYPSEKEMLKELLQNADDAKATEICFVFDPRQHPVDRIFDDKWAPLQGPALCVYNNQPFTEDDVRGIQNLGKGTKEGNPYKTGQYGIGFNSVYHITDCPSFISGNDILCIFDPHARYAPGATSISPGRMFRDLDADFRTQFSDVLDLYLGTHFKLDNCTMFRFPLRNAEMAKVSEISSVPASDRMVQNLLDKLRSDGAELLMFLNHMEKISICEIDKSTGALNVLYSVKGKITDGDRLKRKQFHASVIDSVTKKRQLKDIPVQQITYTMDTEDSEGNLTTWLICNRSGFSSMEKVSKSVISAHKNQDITLFPRGGVAACITHNYKKPHRAFCFLPLSLETGLPFHVNGHFALDSARRNLWRDDNGVGVRSDWNNSLMTALIAPAYVELLIQLKKRYFPGSDPTLSVLQNTPIHVVKDTLKKFLSFFPVNRLDLQPDLYCLVKALYNCIHEDMKRLLPVVRAPNIDGSDLHSAVIITWINMSTSNKTRPFFDNLLQDELQHLKNADYNITTRKTVAENVYRLKHLLLEIGFNLVYNCDETANLYHCLIDADIPVSYVTPADIRSFLMTFSSPDTNCHIGKLPCRLQQTNLKLFHSLKLLVDYCFKDAEENEIEVEGLPLLITLDSVLQTFDAKRPKFLTTYHELIPSRKDLFMNTLYLKYSNILLNCKVAKVFDISSFADLLSSVLPREYKTKSCTKWKDNFASESWLKNAWHFISESVSVKEDQEETKPTFDIVVDTLKDWALLPGTKFTVSANQLVVPEGDVLLPLSLMHIAVFPNAQSDKVFHALMKAGCIQLALNKICSKDSAFVPLLSCHTANIESPTSILKALHYMVQTSTFRAEKLVENDFEALLMYFNCNLNHLMSQDDIKILKSLPCYKSISGRYVSIGKFGTCYVLTKSIPSAEVEKWTQSSSSAFLEEKIHLKELYEVIGCVPVDDLEVYLKHLLPKIENLSYDAKLEHLIYLKNRLSSAEELSEIKEQLFEKLESLLIIHDANSRLKQAKHFYDRTVRVFEVMLPEKLFIPNDFFKKLEQLIKPKNHVTFMTSWVEFLRNIGLKYILSQQQLLQFAKEISVRANTENWSKETLQNTVDILLHHIFQERMDLLSGNFLKELSLIPFLCPERAPAEFIRFHPQYQEVNGTLPLIKFNGAQVNPKFKQCDVLQLLWTSCPILPEKATPLSIKEQEGSDLGPQEQLEQVLNMLNVNLDPPLDKVINNCRNICNITTLDEEMVKTRAKVLRSIYEFLSAEKREFRFQLRGVAFVMVEDGWKLLKPEEVVINLEYESDFKPYLYKLPLELGTFHQLFKHLGTEDIISTKQYVEVLSRIFKNSEGKQLDPNEMRTVKRVVSGLFRSLQNDSVKVRSDLENVRDLALYLPSQDGRLVKSSILVFDDAPHYKSRIQGNIGVQMLVDLSQCYLGKDHGFHTKLIMLFPQKLRPRLLSSILEEQLDEETPKVCQFGALCSLQGRLQLLLSSEQFITGLIRIMKHENDNAFLANEEKAIRLCKALREGLKVSCFEKLQTTLRVKGFNPIPHSRSETFAFLKRFGNAVILLYIQHSDSKDINFLLALAMTLKSATDNLISDTSYLIAMLGCNDIYRIGEKLDSLGVKYDSSEPSKLELPMPGTPIPAEIHYTLLMDPMNVFYPGEYVGYLVDAEGGDIYGSYQPTYTYAIIVQEVEREDADNSSFLGKIYQIDIGYSEYKIVSSLDLYKFSRPEESSQSRDSAPSTPTSPTEFLTPGLRSIPPLFSGRESHKTSSKHQSPKKLKVNSLPEILKEVTSVVEQAWKLPESERKKIIRRLYLKWHPDKNPENHDIANEVFKHLQNEINRLEKQAFLDQNADRASRRTFSTSASRFQSDKYSFQRFYTSWNQEATSHKSERQQQNKEKCPPSAGQTYSQRFFVPPTFKSVGNPVEARRWLRQARANFSAARNDLHKNANEWVCFKCYLSTKLALIAADYAVRGKSDKDVKPTALAQKIEEYSQQLEGLTNDVHTLEAYGVDSLKTRYPDLLPFPQIPNDRFTSEVAMRVMECTACIIIKLENFMQQKV</sequence>
<evidence type="ECO:0000250" key="1">
    <source>
        <dbReference type="UniProtKB" id="Q9JLC8"/>
    </source>
</evidence>
<evidence type="ECO:0000255" key="2">
    <source>
        <dbReference type="PROSITE-ProRule" id="PRU00105"/>
    </source>
</evidence>
<evidence type="ECO:0000255" key="3">
    <source>
        <dbReference type="PROSITE-ProRule" id="PRU00214"/>
    </source>
</evidence>
<evidence type="ECO:0000255" key="4">
    <source>
        <dbReference type="PROSITE-ProRule" id="PRU00286"/>
    </source>
</evidence>
<evidence type="ECO:0000256" key="5">
    <source>
        <dbReference type="SAM" id="MobiDB-lite"/>
    </source>
</evidence>
<evidence type="ECO:0000269" key="6">
    <source>
    </source>
</evidence>
<evidence type="ECO:0000269" key="7">
    <source>
    </source>
</evidence>
<evidence type="ECO:0000269" key="8">
    <source>
    </source>
</evidence>
<evidence type="ECO:0000269" key="9">
    <source>
    </source>
</evidence>
<evidence type="ECO:0000269" key="10">
    <source>
    </source>
</evidence>
<evidence type="ECO:0000269" key="11">
    <source>
    </source>
</evidence>
<evidence type="ECO:0000269" key="12">
    <source>
    </source>
</evidence>
<evidence type="ECO:0000269" key="13">
    <source>
    </source>
</evidence>
<evidence type="ECO:0000269" key="14">
    <source>
    </source>
</evidence>
<evidence type="ECO:0000269" key="15">
    <source>
    </source>
</evidence>
<evidence type="ECO:0000269" key="16">
    <source>
    </source>
</evidence>
<evidence type="ECO:0000269" key="17">
    <source>
    </source>
</evidence>
<evidence type="ECO:0000269" key="18">
    <source>
    </source>
</evidence>
<evidence type="ECO:0000269" key="19">
    <source>
    </source>
</evidence>
<evidence type="ECO:0000269" key="20">
    <source>
    </source>
</evidence>
<evidence type="ECO:0000269" key="21">
    <source>
    </source>
</evidence>
<evidence type="ECO:0000269" key="22">
    <source>
    </source>
</evidence>
<evidence type="ECO:0000269" key="23">
    <source>
    </source>
</evidence>
<evidence type="ECO:0000303" key="24">
    <source>
    </source>
</evidence>
<evidence type="ECO:0000305" key="25"/>
<evidence type="ECO:0007744" key="26">
    <source>
    </source>
</evidence>
<evidence type="ECO:0007744" key="27">
    <source>
    </source>
</evidence>
<evidence type="ECO:0007744" key="28">
    <source>
    </source>
</evidence>
<evidence type="ECO:0007744" key="29">
    <source>
    </source>
</evidence>
<evidence type="ECO:0007744" key="30">
    <source>
    </source>
</evidence>
<evidence type="ECO:0007829" key="31">
    <source>
        <dbReference type="PDB" id="1IUR"/>
    </source>
</evidence>
<evidence type="ECO:0007829" key="32">
    <source>
        <dbReference type="PDB" id="3O10"/>
    </source>
</evidence>
<evidence type="ECO:0007829" key="33">
    <source>
        <dbReference type="PDB" id="5V44"/>
    </source>
</evidence>
<evidence type="ECO:0007829" key="34">
    <source>
        <dbReference type="PDB" id="5V46"/>
    </source>
</evidence>
<evidence type="ECO:0007829" key="35">
    <source>
        <dbReference type="PDB" id="5VSX"/>
    </source>
</evidence>
<proteinExistence type="evidence at protein level"/>
<gene>
    <name type="primary">SACS</name>
    <name evidence="24" type="synonym">DNAJC29</name>
    <name type="synonym">KIAA0730</name>
</gene>
<feature type="chain" id="PRO_0000097563" description="Sacsin">
    <location>
        <begin position="1"/>
        <end position="4579"/>
    </location>
</feature>
<feature type="domain" description="Ubiquitin-like" evidence="3">
    <location>
        <begin position="9"/>
        <end position="84"/>
    </location>
</feature>
<feature type="domain" description="J" evidence="4">
    <location>
        <begin position="4306"/>
        <end position="4393"/>
    </location>
</feature>
<feature type="domain" description="HEPN" evidence="2">
    <location>
        <begin position="4451"/>
        <end position="4567"/>
    </location>
</feature>
<feature type="region of interest" description="Disordered" evidence="5">
    <location>
        <begin position="4248"/>
        <end position="4273"/>
    </location>
</feature>
<feature type="region of interest" description="Disordered" evidence="5">
    <location>
        <begin position="4279"/>
        <end position="4298"/>
    </location>
</feature>
<feature type="region of interest" description="Disordered" evidence="5">
    <location>
        <begin position="4405"/>
        <end position="4427"/>
    </location>
</feature>
<feature type="compositionally biased region" description="Polar residues" evidence="5">
    <location>
        <begin position="4254"/>
        <end position="4267"/>
    </location>
</feature>
<feature type="compositionally biased region" description="Basic residues" evidence="5">
    <location>
        <begin position="4288"/>
        <end position="4298"/>
    </location>
</feature>
<feature type="compositionally biased region" description="Basic and acidic residues" evidence="5">
    <location>
        <begin position="4406"/>
        <end position="4420"/>
    </location>
</feature>
<feature type="modified residue" description="N6-acetyllysine" evidence="26">
    <location>
        <position position="943"/>
    </location>
</feature>
<feature type="modified residue" description="Phosphoserine" evidence="27 28 30">
    <location>
        <position position="1779"/>
    </location>
</feature>
<feature type="modified residue" description="Phosphoserine" evidence="1">
    <location>
        <position position="2511"/>
    </location>
</feature>
<feature type="modified residue" description="Phosphothreonine" evidence="1">
    <location>
        <position position="2516"/>
    </location>
</feature>
<feature type="modified residue" description="Phosphoserine" evidence="29">
    <location>
        <position position="3435"/>
    </location>
</feature>
<feature type="modified residue" description="Phosphothreonine" evidence="1">
    <location>
        <position position="4261"/>
    </location>
</feature>
<feature type="modified residue" description="Phosphoserine" evidence="27 30">
    <location>
        <position position="4264"/>
    </location>
</feature>
<feature type="splice variant" id="VSP_022325" description="In isoform 2." evidence="25">
    <location>
        <begin position="1"/>
        <end position="750"/>
    </location>
</feature>
<feature type="sequence variant" id="VAR_064801" description="In SACS." evidence="16">
    <original>D</original>
    <variation>Y</variation>
    <location>
        <position position="168"/>
    </location>
</feature>
<feature type="sequence variant" id="VAR_064802" description="In SACS." evidence="20">
    <original>T</original>
    <variation>K</variation>
    <location>
        <position position="201"/>
    </location>
</feature>
<feature type="sequence variant" id="VAR_059716" description="In dbSNP:rs2031640.">
    <original>N</original>
    <variation>K</variation>
    <location>
        <position position="232"/>
    </location>
</feature>
<feature type="sequence variant" id="VAR_064803" description="In SACS." evidence="13">
    <original>L</original>
    <variation>F</variation>
    <location>
        <position position="308"/>
    </location>
</feature>
<feature type="sequence variant" id="VAR_064804" description="In SACS; associated in cis with Q-2798." evidence="20">
    <original>L</original>
    <variation>P</variation>
    <location>
        <position position="556"/>
    </location>
</feature>
<feature type="sequence variant" id="VAR_059717" description="In dbSNP:rs17325713.">
    <original>A</original>
    <variation>T</variation>
    <location>
        <position position="694"/>
    </location>
</feature>
<feature type="sequence variant" id="VAR_064805" description="In SACS." evidence="17">
    <original>L</original>
    <variation>P</variation>
    <location>
        <position position="802"/>
    </location>
</feature>
<feature type="sequence variant" id="VAR_064806" description="In SACS." evidence="20">
    <original>C</original>
    <variation>R</variation>
    <location>
        <position position="991"/>
    </location>
</feature>
<feature type="sequence variant" id="VAR_064807" description="In SACS; atypical phenotype without spasticity or hyperreflexia; dbSNP:rs137853019." evidence="10">
    <original>F</original>
    <variation>S</variation>
    <location>
        <position position="1054"/>
    </location>
</feature>
<feature type="sequence variant" id="VAR_064808" description="In SACS." evidence="14">
    <original>M</original>
    <variation>K</variation>
    <location>
        <position position="1311"/>
    </location>
</feature>
<feature type="sequence variant" id="VAR_064809" description="In SACS; dbSNP:rs764992284." evidence="20">
    <original>R</original>
    <variation>P</variation>
    <location>
        <position position="1575"/>
    </location>
</feature>
<feature type="sequence variant" id="VAR_064810" description="In SACS; dbSNP:rs1868949196." evidence="20">
    <original>H</original>
    <variation>R</variation>
    <location>
        <position position="1587"/>
    </location>
</feature>
<feature type="sequence variant" id="VAR_035986" description="In a colorectal cancer sample; somatic mutation; dbSNP:rs2137619273." evidence="12">
    <original>M</original>
    <variation>I</variation>
    <location>
        <position position="1795"/>
    </location>
</feature>
<feature type="sequence variant" id="VAR_064811" description="In SACS; dbSNP:rs137853017." evidence="7">
    <original>W</original>
    <variation>R</variation>
    <location>
        <position position="1946"/>
    </location>
</feature>
<feature type="sequence variant" id="VAR_059718" description="In dbSNP:rs35865691.">
    <original>K</original>
    <variation>N</variation>
    <location>
        <position position="2017"/>
    </location>
</feature>
<feature type="sequence variant" id="VAR_064812" description="In SACS." evidence="20">
    <location>
        <position position="2032"/>
    </location>
</feature>
<feature type="sequence variant" id="VAR_064813" description="In SACS; dbSNP:rs780332615." evidence="11">
    <original>R</original>
    <variation>C</variation>
    <location>
        <position position="2703"/>
    </location>
</feature>
<feature type="sequence variant" id="VAR_064814" description="In SACS; associated in cis with P-556; dbSNP:rs140551762." evidence="20">
    <original>P</original>
    <variation>Q</variation>
    <location>
        <position position="2798"/>
    </location>
</feature>
<feature type="sequence variant" id="VAR_064815" description="In SACS." evidence="16">
    <location>
        <position position="2801"/>
    </location>
</feature>
<feature type="sequence variant" id="VAR_059719" description="In dbSNP:rs11839380.">
    <original>K</original>
    <variation>R</variation>
    <location>
        <position position="2958"/>
    </location>
</feature>
<feature type="sequence variant" id="VAR_076760" description="In SACS." evidence="22">
    <original>P</original>
    <variation>PKLP</variation>
    <location>
        <position position="3118"/>
    </location>
</feature>
<feature type="sequence variant" id="VAR_064816" description="In SACS; dbSNP:rs137853018." evidence="8">
    <original>W</original>
    <variation>R</variation>
    <location>
        <position position="3248"/>
    </location>
</feature>
<feature type="sequence variant" id="VAR_010296" description="In dbSNP:rs17078605." evidence="6">
    <original>V</original>
    <variation>A</variation>
    <location>
        <position position="3369"/>
    </location>
</feature>
<feature type="sequence variant" id="VAR_064817" description="In SACS." evidence="16">
    <original>L</original>
    <variation>P</variation>
    <location>
        <position position="3481"/>
    </location>
</feature>
<feature type="sequence variant" id="VAR_064818" description="In SACS; associated in cis with T-3652; dbSNP:rs281865119." evidence="20">
    <original>R</original>
    <variation>Q</variation>
    <location>
        <position position="3636"/>
    </location>
</feature>
<feature type="sequence variant" id="VAR_064819" description="In SACS." evidence="20">
    <original>L</original>
    <variation>P</variation>
    <location>
        <position position="3645"/>
    </location>
</feature>
<feature type="sequence variant" id="VAR_064820" description="In SACS; associated in cis with Q-3636; dbSNP:rs201505036." evidence="20">
    <original>P</original>
    <variation>T</variation>
    <location>
        <position position="3652"/>
    </location>
</feature>
<feature type="sequence variant" id="VAR_064821" description="In SACS." evidence="15">
    <original>F</original>
    <variation>S</variation>
    <location>
        <position position="3653"/>
    </location>
</feature>
<feature type="sequence variant" id="VAR_059720" description="In dbSNP:rs17078601.">
    <original>P</original>
    <variation>A</variation>
    <location>
        <position position="3678"/>
    </location>
</feature>
<feature type="sequence variant" id="VAR_069775" description="Found in non-ataxic spastic paraplegia with peripheral neuropathy; likely pathogenic." evidence="21">
    <original>T</original>
    <variation>A</variation>
    <location>
        <position position="3702"/>
    </location>
</feature>
<feature type="sequence variant" id="VAR_083891" description="Found in a patient with spastic paraplegia; uncertain significance; dbSNP:rs376188585." evidence="23">
    <original>N</original>
    <variation>S</variation>
    <location>
        <position position="3750"/>
    </location>
</feature>
<feature type="sequence variant" id="VAR_064822" description="In SACS; dbSNP:rs137853016." evidence="7">
    <original>A</original>
    <variation>P</variation>
    <location>
        <position position="4074"/>
    </location>
</feature>
<feature type="sequence variant" id="VAR_059721" description="In dbSNP:rs35799469.">
    <original>N</original>
    <variation>D</variation>
    <location>
        <position position="4217"/>
    </location>
</feature>
<feature type="sequence variant" id="VAR_064823" description="In SACS; dbSNP:rs773009784." evidence="16">
    <original>R</original>
    <variation>Q</variation>
    <location>
        <position position="4331"/>
    </location>
</feature>
<feature type="sequence variant" id="VAR_064824" description="In SACS; dbSNP:rs749383532." evidence="20">
    <original>E</original>
    <variation>K</variation>
    <location>
        <position position="4343"/>
    </location>
</feature>
<feature type="sequence variant" id="VAR_064825" description="In SACS." evidence="20">
    <original>K</original>
    <variation>T</variation>
    <location>
        <position position="4508"/>
    </location>
</feature>
<feature type="sequence variant" id="VAR_064826" description="In SACS; dbSNP:rs1178912631." evidence="9">
    <original>N</original>
    <variation>D</variation>
    <location>
        <position position="4549"/>
    </location>
</feature>
<feature type="sequence conflict" description="In Ref. 4; BAC03486." evidence="25" ref="4">
    <original>RPCTQLQLLNPERFARLIKEV</original>
    <variation>FLFDEDSNGKLKMVAVLITSC</variation>
    <location>
        <begin position="730"/>
        <end position="750"/>
    </location>
</feature>
<feature type="sequence conflict" description="In Ref. 3; CAE45964." evidence="25" ref="3">
    <original>QTCVELIRLRIPSLVILDDES</original>
    <variation>FLFDEDSNGKLKMVAVLITSC</variation>
    <location>
        <begin position="812"/>
        <end position="832"/>
    </location>
</feature>
<feature type="sequence conflict" description="In Ref. 3; CAH18265." evidence="25" ref="3">
    <original>G</original>
    <variation>R</variation>
    <location>
        <position position="1827"/>
    </location>
</feature>
<feature type="helix" evidence="35">
    <location>
        <begin position="31"/>
        <end position="42"/>
    </location>
</feature>
<feature type="helix" evidence="35">
    <location>
        <begin position="46"/>
        <end position="48"/>
    </location>
</feature>
<feature type="strand" evidence="35">
    <location>
        <begin position="50"/>
        <end position="53"/>
    </location>
</feature>
<feature type="helix" evidence="35">
    <location>
        <begin position="64"/>
        <end position="67"/>
    </location>
</feature>
<feature type="strand" evidence="35">
    <location>
        <begin position="77"/>
        <end position="79"/>
    </location>
</feature>
<feature type="strand" evidence="34">
    <location>
        <begin position="89"/>
        <end position="91"/>
    </location>
</feature>
<feature type="helix" evidence="33">
    <location>
        <begin position="96"/>
        <end position="106"/>
    </location>
</feature>
<feature type="helix" evidence="33">
    <location>
        <begin position="112"/>
        <end position="123"/>
    </location>
</feature>
<feature type="strand" evidence="33">
    <location>
        <begin position="127"/>
        <end position="134"/>
    </location>
</feature>
<feature type="strand" evidence="33">
    <location>
        <begin position="140"/>
        <end position="144"/>
    </location>
</feature>
<feature type="helix" evidence="33">
    <location>
        <begin position="146"/>
        <end position="151"/>
    </location>
</feature>
<feature type="strand" evidence="33">
    <location>
        <begin position="155"/>
        <end position="162"/>
    </location>
</feature>
<feature type="helix" evidence="33">
    <location>
        <begin position="166"/>
        <end position="172"/>
    </location>
</feature>
<feature type="strand" evidence="34">
    <location>
        <begin position="175"/>
        <end position="177"/>
    </location>
</feature>
<feature type="helix" evidence="33">
    <location>
        <begin position="193"/>
        <end position="199"/>
    </location>
</feature>
<feature type="strand" evidence="33">
    <location>
        <begin position="205"/>
        <end position="209"/>
    </location>
</feature>
<feature type="strand" evidence="33">
    <location>
        <begin position="211"/>
        <end position="215"/>
    </location>
</feature>
<feature type="strand" evidence="33">
    <location>
        <begin position="227"/>
        <end position="232"/>
    </location>
</feature>
<feature type="turn" evidence="33">
    <location>
        <begin position="233"/>
        <end position="236"/>
    </location>
</feature>
<feature type="helix" evidence="33">
    <location>
        <begin position="237"/>
        <end position="242"/>
    </location>
</feature>
<feature type="helix" evidence="33">
    <location>
        <begin position="244"/>
        <end position="247"/>
    </location>
</feature>
<feature type="helix" evidence="33">
    <location>
        <begin position="248"/>
        <end position="250"/>
    </location>
</feature>
<feature type="strand" evidence="33">
    <location>
        <begin position="251"/>
        <end position="253"/>
    </location>
</feature>
<feature type="helix" evidence="33">
    <location>
        <begin position="258"/>
        <end position="263"/>
    </location>
</feature>
<feature type="strand" evidence="33">
    <location>
        <begin position="266"/>
        <end position="274"/>
    </location>
</feature>
<feature type="helix" evidence="33">
    <location>
        <begin position="289"/>
        <end position="308"/>
    </location>
</feature>
<feature type="strand" evidence="33">
    <location>
        <begin position="315"/>
        <end position="321"/>
    </location>
</feature>
<feature type="strand" evidence="33">
    <location>
        <begin position="327"/>
        <end position="334"/>
    </location>
</feature>
<feature type="helix" evidence="31">
    <location>
        <begin position="4307"/>
        <end position="4316"/>
    </location>
</feature>
<feature type="helix" evidence="31">
    <location>
        <begin position="4323"/>
        <end position="4335"/>
    </location>
</feature>
<feature type="turn" evidence="31">
    <location>
        <begin position="4338"/>
        <end position="4340"/>
    </location>
</feature>
<feature type="strand" evidence="31">
    <location>
        <begin position="4341"/>
        <end position="4343"/>
    </location>
</feature>
<feature type="helix" evidence="31">
    <location>
        <begin position="4345"/>
        <end position="4365"/>
    </location>
</feature>
<feature type="strand" evidence="31">
    <location>
        <begin position="4369"/>
        <end position="4373"/>
    </location>
</feature>
<feature type="helix" evidence="32">
    <location>
        <begin position="4444"/>
        <end position="4461"/>
    </location>
</feature>
<feature type="helix" evidence="32">
    <location>
        <begin position="4462"/>
        <end position="4464"/>
    </location>
</feature>
<feature type="turn" evidence="32">
    <location>
        <begin position="4465"/>
        <end position="4468"/>
    </location>
</feature>
<feature type="helix" evidence="32">
    <location>
        <begin position="4470"/>
        <end position="4493"/>
    </location>
</feature>
<feature type="helix" evidence="32">
    <location>
        <begin position="4502"/>
        <end position="4510"/>
    </location>
</feature>
<feature type="helix" evidence="32">
    <location>
        <begin position="4514"/>
        <end position="4516"/>
    </location>
</feature>
<feature type="helix" evidence="32">
    <location>
        <begin position="4519"/>
        <end position="4528"/>
    </location>
</feature>
<feature type="turn" evidence="32">
    <location>
        <begin position="4533"/>
        <end position="4537"/>
    </location>
</feature>
<feature type="helix" evidence="32">
    <location>
        <begin position="4539"/>
        <end position="4541"/>
    </location>
</feature>
<feature type="helix" evidence="32">
    <location>
        <begin position="4548"/>
        <end position="4551"/>
    </location>
</feature>
<feature type="helix" evidence="32">
    <location>
        <begin position="4554"/>
        <end position="4576"/>
    </location>
</feature>
<organism>
    <name type="scientific">Homo sapiens</name>
    <name type="common">Human</name>
    <dbReference type="NCBI Taxonomy" id="9606"/>
    <lineage>
        <taxon>Eukaryota</taxon>
        <taxon>Metazoa</taxon>
        <taxon>Chordata</taxon>
        <taxon>Craniata</taxon>
        <taxon>Vertebrata</taxon>
        <taxon>Euteleostomi</taxon>
        <taxon>Mammalia</taxon>
        <taxon>Eutheria</taxon>
        <taxon>Euarchontoglires</taxon>
        <taxon>Primates</taxon>
        <taxon>Haplorrhini</taxon>
        <taxon>Catarrhini</taxon>
        <taxon>Hominidae</taxon>
        <taxon>Homo</taxon>
    </lineage>
</organism>
<accession>Q9NZJ4</accession>
<accession>O94835</accession>
<accession>Q5T9J5</accession>
<accession>Q5T9J7</accession>
<accession>Q5T9J8</accession>
<accession>Q68DF5</accession>
<accession>Q6MZR4</accession>
<accession>Q8NBF9</accession>
<comment type="function">
    <text evidence="18">Co-chaperone which acts as a regulator of the Hsp70 chaperone machinery and may be involved in the processing of other ataxia-linked proteins.</text>
</comment>
<comment type="interaction">
    <interactant intactId="EBI-949847">
        <id>Q9NZJ4</id>
    </interactant>
    <interactant intactId="EBI-949847">
        <id>Q9NZJ4</id>
        <label>SACS</label>
    </interactant>
    <organismsDiffer>false</organismsDiffer>
    <experiments>4</experiments>
</comment>
<comment type="subcellular location">
    <subcellularLocation>
        <location evidence="18">Cytoplasm</location>
    </subcellularLocation>
    <text>Predominantly cytoplasmic, a small portion is present in the nucleus and also shows a partial mitochondrial overlap with the mitochondrial marker Hsp60.</text>
</comment>
<comment type="alternative products">
    <event type="alternative splicing"/>
    <isoform>
        <id>Q9NZJ4-1</id>
        <name>1</name>
        <sequence type="displayed"/>
    </isoform>
    <isoform>
        <id>Q9NZJ4-2</id>
        <name>2</name>
        <sequence type="described" ref="VSP_022325"/>
    </isoform>
</comment>
<comment type="tissue specificity">
    <text>Highly expressed in the central nervous system. Also found in skeletal muscle and at low levels in pancreas.</text>
</comment>
<comment type="domain">
    <text evidence="18">The ubiquitin-like domain mediates interaction with the proteasome.</text>
</comment>
<comment type="domain">
    <text evidence="18">The J domain is functional and is shown to stimulate E.coli dnaK ATPase activity.</text>
</comment>
<comment type="disease" evidence="6 7 8 9 10 11 13 14 15 16 17 19 20 22">
    <disease id="DI-01259">
        <name>Spastic ataxia Charlevoix-Saguenay type</name>
        <acronym>SACS</acronym>
        <description>A neurodegenerative disease characterized by early-onset cerebellar ataxia, spasticity, retinal hypermyelination, pyramidal signs, and both axonal and demyelinating neuropathy with loss of sensory nerve conduction and reduced motor conduction velocities. Other features include dysarthria, distal muscle wasting, nystagmus, defect in conjugate pursuit ocular movements, retinal striation (from prominent retinal nerves) obscuring the retinal blood vessels in places, and the frequent presence of mitral valve prolapse.</description>
        <dbReference type="MIM" id="270550"/>
    </disease>
    <text>The disease is caused by variants affecting the gene represented in this entry.</text>
</comment>
<comment type="sequence caution" evidence="25">
    <conflict type="erroneous initiation">
        <sequence resource="EMBL-CDS" id="BAC03486"/>
    </conflict>
    <text>Truncated N-terminus.</text>
</comment>
<comment type="sequence caution" evidence="25">
    <conflict type="erroneous initiation">
        <sequence resource="EMBL-CDS" id="CAH18265"/>
    </conflict>
    <text>Truncated N-terminus.</text>
</comment>
<keyword id="KW-0002">3D-structure</keyword>
<keyword id="KW-0007">Acetylation</keyword>
<keyword id="KW-0025">Alternative splicing</keyword>
<keyword id="KW-0143">Chaperone</keyword>
<keyword id="KW-0963">Cytoplasm</keyword>
<keyword id="KW-0225">Disease variant</keyword>
<keyword id="KW-0523">Neurodegeneration</keyword>
<keyword id="KW-0597">Phosphoprotein</keyword>
<keyword id="KW-1267">Proteomics identification</keyword>
<keyword id="KW-1185">Reference proteome</keyword>
<reference key="1">
    <citation type="journal article" date="2000" name="Nat. Genet.">
        <title>ARSACS, a spastic ataxia common in northeastern Quebec, is caused by mutations in a new gene encoding an 11.5-kb ORF.</title>
        <authorList>
            <person name="Engert J.C."/>
            <person name="Berube P."/>
            <person name="Mercier J."/>
            <person name="Dore C."/>
            <person name="Lepage P."/>
            <person name="Ge B."/>
            <person name="Bouchard J.-P."/>
            <person name="Mathieu J."/>
            <person name="Melancon S.B."/>
            <person name="Schalling M."/>
            <person name="Lander E.S."/>
            <person name="Morgan K."/>
            <person name="Hudson T.J."/>
            <person name="Richter A."/>
        </authorList>
    </citation>
    <scope>NUCLEOTIDE SEQUENCE [GENOMIC DNA]</scope>
    <scope>VARIANT ALA-3369</scope>
    <scope>INVOLVEMENT IN SACS</scope>
</reference>
<reference key="2">
    <citation type="journal article" date="2004" name="Nature">
        <title>The DNA sequence and analysis of human chromosome 13.</title>
        <authorList>
            <person name="Dunham A."/>
            <person name="Matthews L.H."/>
            <person name="Burton J."/>
            <person name="Ashurst J.L."/>
            <person name="Howe K.L."/>
            <person name="Ashcroft K.J."/>
            <person name="Beare D.M."/>
            <person name="Burford D.C."/>
            <person name="Hunt S.E."/>
            <person name="Griffiths-Jones S."/>
            <person name="Jones M.C."/>
            <person name="Keenan S.J."/>
            <person name="Oliver K."/>
            <person name="Scott C.E."/>
            <person name="Ainscough R."/>
            <person name="Almeida J.P."/>
            <person name="Ambrose K.D."/>
            <person name="Andrews D.T."/>
            <person name="Ashwell R.I.S."/>
            <person name="Babbage A.K."/>
            <person name="Bagguley C.L."/>
            <person name="Bailey J."/>
            <person name="Bannerjee R."/>
            <person name="Barlow K.F."/>
            <person name="Bates K."/>
            <person name="Beasley H."/>
            <person name="Bird C.P."/>
            <person name="Bray-Allen S."/>
            <person name="Brown A.J."/>
            <person name="Brown J.Y."/>
            <person name="Burrill W."/>
            <person name="Carder C."/>
            <person name="Carter N.P."/>
            <person name="Chapman J.C."/>
            <person name="Clamp M.E."/>
            <person name="Clark S.Y."/>
            <person name="Clarke G."/>
            <person name="Clee C.M."/>
            <person name="Clegg S.C."/>
            <person name="Cobley V."/>
            <person name="Collins J.E."/>
            <person name="Corby N."/>
            <person name="Coville G.J."/>
            <person name="Deloukas P."/>
            <person name="Dhami P."/>
            <person name="Dunham I."/>
            <person name="Dunn M."/>
            <person name="Earthrowl M.E."/>
            <person name="Ellington A.G."/>
            <person name="Faulkner L."/>
            <person name="Frankish A.G."/>
            <person name="Frankland J."/>
            <person name="French L."/>
            <person name="Garner P."/>
            <person name="Garnett J."/>
            <person name="Gilbert J.G.R."/>
            <person name="Gilson C.J."/>
            <person name="Ghori J."/>
            <person name="Grafham D.V."/>
            <person name="Gribble S.M."/>
            <person name="Griffiths C."/>
            <person name="Hall R.E."/>
            <person name="Hammond S."/>
            <person name="Harley J.L."/>
            <person name="Hart E.A."/>
            <person name="Heath P.D."/>
            <person name="Howden P.J."/>
            <person name="Huckle E.J."/>
            <person name="Hunt P.J."/>
            <person name="Hunt A.R."/>
            <person name="Johnson C."/>
            <person name="Johnson D."/>
            <person name="Kay M."/>
            <person name="Kimberley A.M."/>
            <person name="King A."/>
            <person name="Laird G.K."/>
            <person name="Langford C.J."/>
            <person name="Lawlor S."/>
            <person name="Leongamornlert D.A."/>
            <person name="Lloyd D.M."/>
            <person name="Lloyd C."/>
            <person name="Loveland J.E."/>
            <person name="Lovell J."/>
            <person name="Martin S."/>
            <person name="Mashreghi-Mohammadi M."/>
            <person name="McLaren S.J."/>
            <person name="McMurray A."/>
            <person name="Milne S."/>
            <person name="Moore M.J.F."/>
            <person name="Nickerson T."/>
            <person name="Palmer S.A."/>
            <person name="Pearce A.V."/>
            <person name="Peck A.I."/>
            <person name="Pelan S."/>
            <person name="Phillimore B."/>
            <person name="Porter K.M."/>
            <person name="Rice C.M."/>
            <person name="Searle S."/>
            <person name="Sehra H.K."/>
            <person name="Shownkeen R."/>
            <person name="Skuce C.D."/>
            <person name="Smith M."/>
            <person name="Steward C.A."/>
            <person name="Sycamore N."/>
            <person name="Tester J."/>
            <person name="Thomas D.W."/>
            <person name="Tracey A."/>
            <person name="Tromans A."/>
            <person name="Tubby B."/>
            <person name="Wall M."/>
            <person name="Wallis J.M."/>
            <person name="West A.P."/>
            <person name="Whitehead S.L."/>
            <person name="Willey D.L."/>
            <person name="Wilming L."/>
            <person name="Wray P.W."/>
            <person name="Wright M.W."/>
            <person name="Young L."/>
            <person name="Coulson A."/>
            <person name="Durbin R.M."/>
            <person name="Hubbard T."/>
            <person name="Sulston J.E."/>
            <person name="Beck S."/>
            <person name="Bentley D.R."/>
            <person name="Rogers J."/>
            <person name="Ross M.T."/>
        </authorList>
    </citation>
    <scope>NUCLEOTIDE SEQUENCE [LARGE SCALE GENOMIC DNA]</scope>
</reference>
<reference key="3">
    <citation type="journal article" date="2007" name="BMC Genomics">
        <title>The full-ORF clone resource of the German cDNA consortium.</title>
        <authorList>
            <person name="Bechtel S."/>
            <person name="Rosenfelder H."/>
            <person name="Duda A."/>
            <person name="Schmidt C.P."/>
            <person name="Ernst U."/>
            <person name="Wellenreuther R."/>
            <person name="Mehrle A."/>
            <person name="Schuster C."/>
            <person name="Bahr A."/>
            <person name="Bloecker H."/>
            <person name="Heubner D."/>
            <person name="Hoerlein A."/>
            <person name="Michel G."/>
            <person name="Wedler H."/>
            <person name="Koehrer K."/>
            <person name="Ottenwaelder B."/>
            <person name="Poustka A."/>
            <person name="Wiemann S."/>
            <person name="Schupp I."/>
        </authorList>
    </citation>
    <scope>NUCLEOTIDE SEQUENCE [LARGE SCALE MRNA] OF 102-2438 (ISOFORM 1)</scope>
    <source>
        <tissue>Fetal liver</tissue>
        <tissue>Uterine endothelium</tissue>
    </source>
</reference>
<reference key="4">
    <citation type="journal article" date="2004" name="Nat. Genet.">
        <title>Complete sequencing and characterization of 21,243 full-length human cDNAs.</title>
        <authorList>
            <person name="Ota T."/>
            <person name="Suzuki Y."/>
            <person name="Nishikawa T."/>
            <person name="Otsuki T."/>
            <person name="Sugiyama T."/>
            <person name="Irie R."/>
            <person name="Wakamatsu A."/>
            <person name="Hayashi K."/>
            <person name="Sato H."/>
            <person name="Nagai K."/>
            <person name="Kimura K."/>
            <person name="Makita H."/>
            <person name="Sekine M."/>
            <person name="Obayashi M."/>
            <person name="Nishi T."/>
            <person name="Shibahara T."/>
            <person name="Tanaka T."/>
            <person name="Ishii S."/>
            <person name="Yamamoto J."/>
            <person name="Saito K."/>
            <person name="Kawai Y."/>
            <person name="Isono Y."/>
            <person name="Nakamura Y."/>
            <person name="Nagahari K."/>
            <person name="Murakami K."/>
            <person name="Yasuda T."/>
            <person name="Iwayanagi T."/>
            <person name="Wagatsuma M."/>
            <person name="Shiratori A."/>
            <person name="Sudo H."/>
            <person name="Hosoiri T."/>
            <person name="Kaku Y."/>
            <person name="Kodaira H."/>
            <person name="Kondo H."/>
            <person name="Sugawara M."/>
            <person name="Takahashi M."/>
            <person name="Kanda K."/>
            <person name="Yokoi T."/>
            <person name="Furuya T."/>
            <person name="Kikkawa E."/>
            <person name="Omura Y."/>
            <person name="Abe K."/>
            <person name="Kamihara K."/>
            <person name="Katsuta N."/>
            <person name="Sato K."/>
            <person name="Tanikawa M."/>
            <person name="Yamazaki M."/>
            <person name="Ninomiya K."/>
            <person name="Ishibashi T."/>
            <person name="Yamashita H."/>
            <person name="Murakawa K."/>
            <person name="Fujimori K."/>
            <person name="Tanai H."/>
            <person name="Kimata M."/>
            <person name="Watanabe M."/>
            <person name="Hiraoka S."/>
            <person name="Chiba Y."/>
            <person name="Ishida S."/>
            <person name="Ono Y."/>
            <person name="Takiguchi S."/>
            <person name="Watanabe S."/>
            <person name="Yosida M."/>
            <person name="Hotuta T."/>
            <person name="Kusano J."/>
            <person name="Kanehori K."/>
            <person name="Takahashi-Fujii A."/>
            <person name="Hara H."/>
            <person name="Tanase T.-O."/>
            <person name="Nomura Y."/>
            <person name="Togiya S."/>
            <person name="Komai F."/>
            <person name="Hara R."/>
            <person name="Takeuchi K."/>
            <person name="Arita M."/>
            <person name="Imose N."/>
            <person name="Musashino K."/>
            <person name="Yuuki H."/>
            <person name="Oshima A."/>
            <person name="Sasaki N."/>
            <person name="Aotsuka S."/>
            <person name="Yoshikawa Y."/>
            <person name="Matsunawa H."/>
            <person name="Ichihara T."/>
            <person name="Shiohata N."/>
            <person name="Sano S."/>
            <person name="Moriya S."/>
            <person name="Momiyama H."/>
            <person name="Satoh N."/>
            <person name="Takami S."/>
            <person name="Terashima Y."/>
            <person name="Suzuki O."/>
            <person name="Nakagawa S."/>
            <person name="Senoh A."/>
            <person name="Mizoguchi H."/>
            <person name="Goto Y."/>
            <person name="Shimizu F."/>
            <person name="Wakebe H."/>
            <person name="Hishigaki H."/>
            <person name="Watanabe T."/>
            <person name="Sugiyama A."/>
            <person name="Takemoto M."/>
            <person name="Kawakami B."/>
            <person name="Yamazaki M."/>
            <person name="Watanabe K."/>
            <person name="Kumagai A."/>
            <person name="Itakura S."/>
            <person name="Fukuzumi Y."/>
            <person name="Fujimori Y."/>
            <person name="Komiyama M."/>
            <person name="Tashiro H."/>
            <person name="Tanigami A."/>
            <person name="Fujiwara T."/>
            <person name="Ono T."/>
            <person name="Yamada K."/>
            <person name="Fujii Y."/>
            <person name="Ozaki K."/>
            <person name="Hirao M."/>
            <person name="Ohmori Y."/>
            <person name="Kawabata A."/>
            <person name="Hikiji T."/>
            <person name="Kobatake N."/>
            <person name="Inagaki H."/>
            <person name="Ikema Y."/>
            <person name="Okamoto S."/>
            <person name="Okitani R."/>
            <person name="Kawakami T."/>
            <person name="Noguchi S."/>
            <person name="Itoh T."/>
            <person name="Shigeta K."/>
            <person name="Senba T."/>
            <person name="Matsumura K."/>
            <person name="Nakajima Y."/>
            <person name="Mizuno T."/>
            <person name="Morinaga M."/>
            <person name="Sasaki M."/>
            <person name="Togashi T."/>
            <person name="Oyama M."/>
            <person name="Hata H."/>
            <person name="Watanabe M."/>
            <person name="Komatsu T."/>
            <person name="Mizushima-Sugano J."/>
            <person name="Satoh T."/>
            <person name="Shirai Y."/>
            <person name="Takahashi Y."/>
            <person name="Nakagawa K."/>
            <person name="Okumura K."/>
            <person name="Nagase T."/>
            <person name="Nomura N."/>
            <person name="Kikuchi H."/>
            <person name="Masuho Y."/>
            <person name="Yamashita R."/>
            <person name="Nakai K."/>
            <person name="Yada T."/>
            <person name="Nakamura Y."/>
            <person name="Ohara O."/>
            <person name="Isogai T."/>
            <person name="Sugano S."/>
        </authorList>
    </citation>
    <scope>NUCLEOTIDE SEQUENCE [LARGE SCALE MRNA] OF 377-750 (ISOFORM 1)</scope>
    <source>
        <tissue>Astrocyte</tissue>
    </source>
</reference>
<reference key="5">
    <citation type="journal article" date="1998" name="DNA Res.">
        <title>Prediction of the coding sequences of unidentified human genes. XI. The complete sequences of 100 new cDNA clones from brain which code for large proteins in vitro.</title>
        <authorList>
            <person name="Nagase T."/>
            <person name="Ishikawa K."/>
            <person name="Suyama M."/>
            <person name="Kikuno R."/>
            <person name="Miyajima N."/>
            <person name="Tanaka A."/>
            <person name="Kotani H."/>
            <person name="Nomura N."/>
            <person name="Ohara O."/>
        </authorList>
    </citation>
    <scope>NUCLEOTIDE SEQUENCE [LARGE SCALE MRNA] OF 3576-4579</scope>
    <source>
        <tissue>Brain</tissue>
    </source>
</reference>
<reference key="6">
    <citation type="journal article" date="2008" name="Proc. Natl. Acad. Sci. U.S.A.">
        <title>A quantitative atlas of mitotic phosphorylation.</title>
        <authorList>
            <person name="Dephoure N."/>
            <person name="Zhou C."/>
            <person name="Villen J."/>
            <person name="Beausoleil S.A."/>
            <person name="Bakalarski C.E."/>
            <person name="Elledge S.J."/>
            <person name="Gygi S.P."/>
        </authorList>
    </citation>
    <scope>IDENTIFICATION BY MASS SPECTROMETRY [LARGE SCALE ANALYSIS]</scope>
    <source>
        <tissue>Cervix carcinoma</tissue>
    </source>
</reference>
<reference key="7">
    <citation type="journal article" date="2009" name="Cell Stress Chaperones">
        <title>Guidelines for the nomenclature of the human heat shock proteins.</title>
        <authorList>
            <person name="Kampinga H.H."/>
            <person name="Hageman J."/>
            <person name="Vos M.J."/>
            <person name="Kubota H."/>
            <person name="Tanguay R.M."/>
            <person name="Bruford E.A."/>
            <person name="Cheetham M.E."/>
            <person name="Chen B."/>
            <person name="Hightower L.E."/>
        </authorList>
    </citation>
    <scope>NOMENCLATURE</scope>
</reference>
<reference key="8">
    <citation type="journal article" date="2009" name="Hum. Mol. Genet.">
        <title>The ataxia protein sacsin is a functional co-chaperone that protects against polyglutamine-expanded ataxin-1.</title>
        <authorList>
            <person name="Parfitt D.A."/>
            <person name="Michael G.J."/>
            <person name="Vermeulen E.G."/>
            <person name="Prodromou N.V."/>
            <person name="Webb T.R."/>
            <person name="Gallo J.M."/>
            <person name="Cheetham M.E."/>
            <person name="Nicoll W.S."/>
            <person name="Blatch G.L."/>
            <person name="Chapple J.P."/>
        </authorList>
    </citation>
    <scope>FUNCTION</scope>
    <scope>SUBCELLULAR LOCATION</scope>
    <scope>DOMAIN UBIQUITIN-LIKE</scope>
    <scope>DOMAIN J</scope>
</reference>
<reference key="9">
    <citation type="journal article" date="2009" name="J. Mol. Neurosci.">
        <title>A novel SACS gene mutation in a Tunisian family.</title>
        <authorList>
            <person name="Bouhlal Y."/>
            <person name="El Euch-Fayeche G."/>
            <person name="Hentati F."/>
            <person name="Amouri R."/>
        </authorList>
    </citation>
    <scope>INVOLVEMENT IN SACS</scope>
</reference>
<reference key="10">
    <citation type="journal article" date="2009" name="Sci. Signal.">
        <title>Quantitative phosphoproteomic analysis of T cell receptor signaling reveals system-wide modulation of protein-protein interactions.</title>
        <authorList>
            <person name="Mayya V."/>
            <person name="Lundgren D.H."/>
            <person name="Hwang S.-I."/>
            <person name="Rezaul K."/>
            <person name="Wu L."/>
            <person name="Eng J.K."/>
            <person name="Rodionov V."/>
            <person name="Han D.K."/>
        </authorList>
    </citation>
    <scope>PHOSPHORYLATION [LARGE SCALE ANALYSIS] AT SER-1779 AND SER-4264</scope>
    <scope>IDENTIFICATION BY MASS SPECTROMETRY [LARGE SCALE ANALYSIS]</scope>
    <source>
        <tissue>Leukemic T-cell</tissue>
    </source>
</reference>
<reference key="11">
    <citation type="journal article" date="2009" name="Science">
        <title>Lysine acetylation targets protein complexes and co-regulates major cellular functions.</title>
        <authorList>
            <person name="Choudhary C."/>
            <person name="Kumar C."/>
            <person name="Gnad F."/>
            <person name="Nielsen M.L."/>
            <person name="Rehman M."/>
            <person name="Walther T.C."/>
            <person name="Olsen J.V."/>
            <person name="Mann M."/>
        </authorList>
    </citation>
    <scope>ACETYLATION [LARGE SCALE ANALYSIS] AT LYS-943</scope>
    <scope>IDENTIFICATION BY MASS SPECTROMETRY [LARGE SCALE ANALYSIS]</scope>
</reference>
<reference key="12">
    <citation type="journal article" date="2010" name="Sci. Signal.">
        <title>Quantitative phosphoproteomics reveals widespread full phosphorylation site occupancy during mitosis.</title>
        <authorList>
            <person name="Olsen J.V."/>
            <person name="Vermeulen M."/>
            <person name="Santamaria A."/>
            <person name="Kumar C."/>
            <person name="Miller M.L."/>
            <person name="Jensen L.J."/>
            <person name="Gnad F."/>
            <person name="Cox J."/>
            <person name="Jensen T.S."/>
            <person name="Nigg E.A."/>
            <person name="Brunak S."/>
            <person name="Mann M."/>
        </authorList>
    </citation>
    <scope>PHOSPHORYLATION [LARGE SCALE ANALYSIS] AT SER-1779</scope>
    <scope>IDENTIFICATION BY MASS SPECTROMETRY [LARGE SCALE ANALYSIS]</scope>
    <source>
        <tissue>Cervix carcinoma</tissue>
    </source>
</reference>
<reference key="13">
    <citation type="journal article" date="2011" name="BMC Syst. Biol.">
        <title>Initial characterization of the human central proteome.</title>
        <authorList>
            <person name="Burkard T.R."/>
            <person name="Planyavsky M."/>
            <person name="Kaupe I."/>
            <person name="Breitwieser F.P."/>
            <person name="Buerckstuemmer T."/>
            <person name="Bennett K.L."/>
            <person name="Superti-Furga G."/>
            <person name="Colinge J."/>
        </authorList>
    </citation>
    <scope>IDENTIFICATION BY MASS SPECTROMETRY [LARGE SCALE ANALYSIS]</scope>
</reference>
<reference key="14">
    <citation type="journal article" date="2011" name="Sci. Signal.">
        <title>System-wide temporal characterization of the proteome and phosphoproteome of human embryonic stem cell differentiation.</title>
        <authorList>
            <person name="Rigbolt K.T."/>
            <person name="Prokhorova T.A."/>
            <person name="Akimov V."/>
            <person name="Henningsen J."/>
            <person name="Johansen P.T."/>
            <person name="Kratchmarova I."/>
            <person name="Kassem M."/>
            <person name="Mann M."/>
            <person name="Olsen J.V."/>
            <person name="Blagoev B."/>
        </authorList>
    </citation>
    <scope>PHOSPHORYLATION [LARGE SCALE ANALYSIS] AT SER-3435</scope>
    <scope>IDENTIFICATION BY MASS SPECTROMETRY [LARGE SCALE ANALYSIS]</scope>
</reference>
<reference key="15">
    <citation type="journal article" date="2013" name="J. Proteome Res.">
        <title>Toward a comprehensive characterization of a human cancer cell phosphoproteome.</title>
        <authorList>
            <person name="Zhou H."/>
            <person name="Di Palma S."/>
            <person name="Preisinger C."/>
            <person name="Peng M."/>
            <person name="Polat A.N."/>
            <person name="Heck A.J."/>
            <person name="Mohammed S."/>
        </authorList>
    </citation>
    <scope>PHOSPHORYLATION [LARGE SCALE ANALYSIS] AT SER-1779 AND SER-4264</scope>
    <scope>IDENTIFICATION BY MASS SPECTROMETRY [LARGE SCALE ANALYSIS]</scope>
    <source>
        <tissue>Cervix carcinoma</tissue>
        <tissue>Erythroleukemia</tissue>
    </source>
</reference>
<reference key="16">
    <citation type="submission" date="2003-10" db="PDB data bank">
        <title>Solution structure of DnaJ domain of human KIAA0730 protein.</title>
        <authorList>
            <consortium name="RIKEN structural genomics initiative (RSGI)"/>
        </authorList>
    </citation>
    <scope>STRUCTURE BY NMR OF 4306-4380</scope>
</reference>
<reference key="17">
    <citation type="journal article" date="2003" name="Arch. Neurol.">
        <title>Phenotypic features and genetic findings in sacsin-related autosomal recessive ataxia in Tunisia.</title>
        <authorList>
            <person name="El Euch-Fayache G."/>
            <person name="Lalani I."/>
            <person name="Amouri R."/>
            <person name="Turki I."/>
            <person name="Ouahchi K."/>
            <person name="Hung W.Y."/>
            <person name="Belal S."/>
            <person name="Siddique T."/>
            <person name="Hentati F."/>
        </authorList>
    </citation>
    <scope>VARIANTS SACS ARG-1946 AND PRO-4074</scope>
</reference>
<reference key="18">
    <citation type="journal article" date="2004" name="Neurogenetics">
        <title>Private SACS mutations in autosomal recessive spastic ataxia of Charlevoix-Saguenay (ARSACS) families from Turkey.</title>
        <authorList>
            <person name="Richter A.M."/>
            <person name="Ozgul R.K."/>
            <person name="Poisson V.C."/>
            <person name="Topaloglu H."/>
        </authorList>
    </citation>
    <scope>VARIANT SACS ASP-4549</scope>
</reference>
<reference key="19">
    <citation type="journal article" date="2004" name="Neurology">
        <title>Identification of a SACS gene missense mutation in ARSACS.</title>
        <authorList>
            <person name="Ogawa T."/>
            <person name="Takiyama Y."/>
            <person name="Sakoe K."/>
            <person name="Mori K."/>
            <person name="Namekawa M."/>
            <person name="Shimazaki H."/>
            <person name="Nakano I."/>
            <person name="Nishizawa M."/>
        </authorList>
    </citation>
    <scope>VARIANT SACS ARG-3248</scope>
</reference>
<reference key="20">
    <citation type="journal article" date="2005" name="Mov. Disord.">
        <title>Novel mutation of SACS gene in a Spanish family with autosomal recessive spastic ataxia.</title>
        <authorList>
            <person name="Criscuolo C."/>
            <person name="Sacca F."/>
            <person name="De Michele G."/>
            <person name="Mancini P."/>
            <person name="Combarros O."/>
            <person name="Infante J."/>
            <person name="Garcia A."/>
            <person name="Banfi S."/>
            <person name="Filla A."/>
            <person name="Berciano J."/>
        </authorList>
    </citation>
    <scope>VARIANT SACS CYS-2703</scope>
</reference>
<reference key="21">
    <citation type="journal article" date="2005" name="Neurology">
        <title>A phenotype without spasticity in sacsin-related ataxia.</title>
        <authorList>
            <person name="Shimazaki H."/>
            <person name="Takiyama Y."/>
            <person name="Sakoe K."/>
            <person name="Ando Y."/>
            <person name="Nakano I."/>
        </authorList>
    </citation>
    <scope>VARIANT SACS SER-1054</scope>
</reference>
<reference key="22">
    <citation type="journal article" date="2006" name="Science">
        <title>The consensus coding sequences of human breast and colorectal cancers.</title>
        <authorList>
            <person name="Sjoeblom T."/>
            <person name="Jones S."/>
            <person name="Wood L.D."/>
            <person name="Parsons D.W."/>
            <person name="Lin J."/>
            <person name="Barber T.D."/>
            <person name="Mandelker D."/>
            <person name="Leary R.J."/>
            <person name="Ptak J."/>
            <person name="Silliman N."/>
            <person name="Szabo S."/>
            <person name="Buckhaults P."/>
            <person name="Farrell C."/>
            <person name="Meeh P."/>
            <person name="Markowitz S.D."/>
            <person name="Willis J."/>
            <person name="Dawson D."/>
            <person name="Willson J.K.V."/>
            <person name="Gazdar A.F."/>
            <person name="Hartigan J."/>
            <person name="Wu L."/>
            <person name="Liu C."/>
            <person name="Parmigiani G."/>
            <person name="Park B.H."/>
            <person name="Bachman K.E."/>
            <person name="Papadopoulos N."/>
            <person name="Vogelstein B."/>
            <person name="Kinzler K.W."/>
            <person name="Velculescu V.E."/>
        </authorList>
    </citation>
    <scope>VARIANT [LARGE SCALE ANALYSIS] ILE-1795</scope>
</reference>
<reference key="23">
    <citation type="journal article" date="2007" name="Mov. Disord.">
        <title>New mutation in the non-gigantic exon of SACS in Japanese siblings.</title>
        <authorList>
            <person name="Takado Y."/>
            <person name="Hara K."/>
            <person name="Shimohata T."/>
            <person name="Tokiguchi S."/>
            <person name="Onodera O."/>
            <person name="Nishizawa M."/>
        </authorList>
    </citation>
    <scope>VARIANT SACS PHE-308</scope>
</reference>
<reference key="24">
    <citation type="journal article" date="2008" name="Eur. J. Hum. Genet.">
        <title>A novel genomic disorder: a deletion of the SACS gene leading to spastic ataxia of Charlevoix-Saguenay.</title>
        <authorList>
            <person name="Breckpot J."/>
            <person name="Takiyama Y."/>
            <person name="Thienpont B."/>
            <person name="Van Vooren S."/>
            <person name="Vermeesch J.R."/>
            <person name="Ortibus E."/>
            <person name="Devriendt K."/>
        </authorList>
    </citation>
    <scope>VARIANT SACS SER-3653</scope>
</reference>
<reference key="25">
    <citation type="journal article" date="2008" name="J. Neurol.">
        <title>Autosomal recessive spastic ataxia of Charlevoix-Saguenay (ARSACS): novel compound heterozygous mutations in the SACS gene.</title>
        <authorList>
            <person name="Kamada S."/>
            <person name="Okawa S."/>
            <person name="Imota T."/>
            <person name="Sugawara M."/>
            <person name="Toyoshima I."/>
        </authorList>
    </citation>
    <scope>VARIANT SACS PRO-802</scope>
</reference>
<reference key="26">
    <citation type="journal article" date="2008" name="J. Neurol. Sci.">
        <title>Novel SACS mutation in a Belgian family with sacsin-related ataxia.</title>
        <authorList>
            <person name="Ouyang Y."/>
            <person name="Segers K."/>
            <person name="Bouquiaux O."/>
            <person name="Wang F.C."/>
            <person name="Janin N."/>
            <person name="Andris C."/>
            <person name="Shimazaki H."/>
            <person name="Sakoe K."/>
            <person name="Nakano I."/>
            <person name="Takiyama Y."/>
        </authorList>
    </citation>
    <scope>VARIANT SACS LYS-1311</scope>
</reference>
<reference key="27">
    <citation type="journal article" date="2008" name="Neurogenetics">
        <title>ARSACS in the Dutch population: a frequent cause of early-onset cerebellar ataxia.</title>
        <authorList>
            <person name="Vermeer S."/>
            <person name="Meijer R.P."/>
            <person name="Pijl B.J."/>
            <person name="Timmermans J."/>
            <person name="Cruysberg J.R."/>
            <person name="Bos M.M."/>
            <person name="Schelhaas H.J."/>
            <person name="van de Warrenburg B.P."/>
            <person name="Knoers N.V."/>
            <person name="Scheffer H."/>
            <person name="Kremer B."/>
        </authorList>
    </citation>
    <scope>VARIANTS SACS TYR-168; GLN-2801 DEL; PRO-3481 AND GLN-4331</scope>
</reference>
<reference key="28">
    <citation type="journal article" date="2010" name="Neurology">
        <title>Mutations in SACS cause atypical and late-onset forms of ARSACS.</title>
        <authorList>
            <person name="Baets J."/>
            <person name="Deconinck T."/>
            <person name="Smets K."/>
            <person name="Goossens D."/>
            <person name="Van den Bergh P."/>
            <person name="Dahan K."/>
            <person name="Schmedding E."/>
            <person name="Santens P."/>
            <person name="Rasic V.M."/>
            <person name="Van Damme P."/>
            <person name="Robberecht W."/>
            <person name="De Meirleir L."/>
            <person name="Michielsens B."/>
            <person name="Del-Favero J."/>
            <person name="Jordanova A."/>
            <person name="De Jonghe P."/>
        </authorList>
    </citation>
    <scope>VARIANTS SACS LYS-201; PRO-556; ARG-991; PRO-1575; ARG-1587; SER-2032 DEL; GLN-2798; GLN-3636; PRO-3645; THR-3652; LYS-4343 AND THR-4508</scope>
</reference>
<reference key="29">
    <citation type="journal article" date="2013" name="Eur. J. Neurol.">
        <title>A novel SACS mutation results in non-ataxic spastic paraplegia and peripheral neuropathy.</title>
        <authorList>
            <person name="Gregianin E."/>
            <person name="Vazza G."/>
            <person name="Scaramel E."/>
            <person name="Boaretto F."/>
            <person name="Vettori A."/>
            <person name="Leonardi E."/>
            <person name="Tosatto S.C."/>
            <person name="Manara R."/>
            <person name="Pegoraro E."/>
            <person name="Mostacciuolo M.L."/>
        </authorList>
    </citation>
    <scope>VARIANT ALA-3702</scope>
</reference>
<reference key="30">
    <citation type="journal article" date="2016" name="Am. J. Med. Genet. A">
        <title>Syndrome disintegration: Exome sequencing reveals that Fitzsimmons syndrome is a co-occurrence of multiple events.</title>
        <authorList>
            <consortium name="FORGE Canada Consortium"/>
            <person name="Armour C.M."/>
            <person name="Smith A."/>
            <person name="Hartley T."/>
            <person name="Chardon J.W."/>
            <person name="Sawyer S."/>
            <person name="Schwartzentruber J."/>
            <person name="Hennekam R."/>
            <person name="Majewski J."/>
            <person name="Bulman D.E."/>
            <person name="Suri M."/>
            <person name="Boycott K.M."/>
        </authorList>
    </citation>
    <scope>VARIANT SACS LYS-LEU-PRO-3118 INS</scope>
</reference>
<reference key="31">
    <citation type="journal article" date="2019" name="Brain">
        <title>Mutations in PCYT2 disrupt etherlipid biosynthesis and cause a complex hereditary spastic paraplegia.</title>
        <authorList>
            <consortium name="Deciphering Developmental Disorders Study"/>
            <person name="Vaz F.M."/>
            <person name="McDermott J.H."/>
            <person name="Alders M."/>
            <person name="Wortmann S.B."/>
            <person name="Koelker S."/>
            <person name="Pras-Raves M.L."/>
            <person name="Vervaart M.A.T."/>
            <person name="van Lenthe H."/>
            <person name="Luyf A.C.M."/>
            <person name="Elfrink H.L."/>
            <person name="Metcalfe K."/>
            <person name="Cuvertino S."/>
            <person name="Clayton P.E."/>
            <person name="Yarwood R."/>
            <person name="Lowe M.P."/>
            <person name="Lovell S."/>
            <person name="Rogers R.C."/>
            <person name="van Kampen A.H.C."/>
            <person name="Ruiter J.P.N."/>
            <person name="Wanders R.J.A."/>
            <person name="Ferdinandusse S."/>
            <person name="van Weeghel M."/>
            <person name="Engelen M."/>
            <person name="Banka S."/>
        </authorList>
    </citation>
    <scope>VARIANT SER-3750</scope>
</reference>
<dbReference type="EMBL" id="AF193556">
    <property type="protein sequence ID" value="AAF31262.1"/>
    <property type="molecule type" value="Genomic_DNA"/>
</dbReference>
<dbReference type="EMBL" id="AL157766">
    <property type="status" value="NOT_ANNOTATED_CDS"/>
    <property type="molecule type" value="Genomic_DNA"/>
</dbReference>
<dbReference type="EMBL" id="BX640926">
    <property type="protein sequence ID" value="CAE45964.1"/>
    <property type="molecule type" value="mRNA"/>
</dbReference>
<dbReference type="EMBL" id="CR749427">
    <property type="protein sequence ID" value="CAH18265.1"/>
    <property type="status" value="ALT_INIT"/>
    <property type="molecule type" value="mRNA"/>
</dbReference>
<dbReference type="EMBL" id="AK090599">
    <property type="protein sequence ID" value="BAC03486.1"/>
    <property type="status" value="ALT_INIT"/>
    <property type="molecule type" value="mRNA"/>
</dbReference>
<dbReference type="EMBL" id="AB018273">
    <property type="protein sequence ID" value="BAA34450.1"/>
    <property type="molecule type" value="mRNA"/>
</dbReference>
<dbReference type="CCDS" id="CCDS9300.2">
    <molecule id="Q9NZJ4-1"/>
</dbReference>
<dbReference type="RefSeq" id="NP_055178.3">
    <molecule id="Q9NZJ4-1"/>
    <property type="nucleotide sequence ID" value="NM_014363.5"/>
</dbReference>
<dbReference type="RefSeq" id="XP_047286212.1">
    <molecule id="Q9NZJ4-1"/>
    <property type="nucleotide sequence ID" value="XM_047430256.1"/>
</dbReference>
<dbReference type="RefSeq" id="XP_054230405.1">
    <molecule id="Q9NZJ4-1"/>
    <property type="nucleotide sequence ID" value="XM_054374430.1"/>
</dbReference>
<dbReference type="PDB" id="1IUR">
    <property type="method" value="NMR"/>
    <property type="chains" value="A=4306-4380"/>
</dbReference>
<dbReference type="PDB" id="3O10">
    <property type="method" value="X-ray"/>
    <property type="resolution" value="1.90 A"/>
    <property type="chains" value="A/B/C/D=4440-4579"/>
</dbReference>
<dbReference type="PDB" id="5V44">
    <property type="method" value="X-ray"/>
    <property type="resolution" value="1.56 A"/>
    <property type="chains" value="A/B/C=89-336"/>
</dbReference>
<dbReference type="PDB" id="5V45">
    <property type="method" value="X-ray"/>
    <property type="resolution" value="1.91 A"/>
    <property type="chains" value="A/B=89-336"/>
</dbReference>
<dbReference type="PDB" id="5V46">
    <property type="method" value="X-ray"/>
    <property type="resolution" value="1.80 A"/>
    <property type="chains" value="A/B=89-336"/>
</dbReference>
<dbReference type="PDB" id="5VSX">
    <property type="method" value="X-ray"/>
    <property type="resolution" value="2.10 A"/>
    <property type="chains" value="A/B=2-85"/>
</dbReference>
<dbReference type="PDB" id="5VSZ">
    <property type="method" value="X-ray"/>
    <property type="resolution" value="2.40 A"/>
    <property type="chains" value="A/B=2-85"/>
</dbReference>
<dbReference type="PDBsum" id="1IUR"/>
<dbReference type="PDBsum" id="3O10"/>
<dbReference type="PDBsum" id="5V44"/>
<dbReference type="PDBsum" id="5V45"/>
<dbReference type="PDBsum" id="5V46"/>
<dbReference type="PDBsum" id="5VSX"/>
<dbReference type="PDBsum" id="5VSZ"/>
<dbReference type="BMRB" id="Q9NZJ4"/>
<dbReference type="SMR" id="Q9NZJ4"/>
<dbReference type="BioGRID" id="117661">
    <property type="interactions" value="61"/>
</dbReference>
<dbReference type="FunCoup" id="Q9NZJ4">
    <property type="interactions" value="888"/>
</dbReference>
<dbReference type="IntAct" id="Q9NZJ4">
    <property type="interactions" value="30"/>
</dbReference>
<dbReference type="MINT" id="Q9NZJ4"/>
<dbReference type="STRING" id="9606.ENSP00000371729"/>
<dbReference type="GlyGen" id="Q9NZJ4">
    <property type="glycosylation" value="5 sites, 1 N-linked glycan (1 site), 1 O-linked glycan (2 sites)"/>
</dbReference>
<dbReference type="iPTMnet" id="Q9NZJ4"/>
<dbReference type="PhosphoSitePlus" id="Q9NZJ4"/>
<dbReference type="BioMuta" id="SACS"/>
<dbReference type="DMDM" id="122066060"/>
<dbReference type="jPOST" id="Q9NZJ4"/>
<dbReference type="MassIVE" id="Q9NZJ4"/>
<dbReference type="PaxDb" id="9606-ENSP00000371735"/>
<dbReference type="PeptideAtlas" id="Q9NZJ4"/>
<dbReference type="ProteomicsDB" id="83414">
    <molecule id="Q9NZJ4-1"/>
</dbReference>
<dbReference type="ProteomicsDB" id="83415">
    <molecule id="Q9NZJ4-2"/>
</dbReference>
<dbReference type="Pumba" id="Q9NZJ4"/>
<dbReference type="ABCD" id="Q9NZJ4">
    <property type="antibodies" value="1 sequenced antibody"/>
</dbReference>
<dbReference type="Antibodypedia" id="57260">
    <property type="antibodies" value="53 antibodies from 14 providers"/>
</dbReference>
<dbReference type="DNASU" id="26278"/>
<dbReference type="Ensembl" id="ENST00000382292.9">
    <molecule id="Q9NZJ4-1"/>
    <property type="protein sequence ID" value="ENSP00000371729.3"/>
    <property type="gene ID" value="ENSG00000151835.17"/>
</dbReference>
<dbReference type="Ensembl" id="ENST00000402364.1">
    <molecule id="Q9NZJ4-2"/>
    <property type="protein sequence ID" value="ENSP00000385844.1"/>
    <property type="gene ID" value="ENSG00000151835.17"/>
</dbReference>
<dbReference type="GeneID" id="26278"/>
<dbReference type="KEGG" id="hsa:26278"/>
<dbReference type="MANE-Select" id="ENST00000382292.9">
    <property type="protein sequence ID" value="ENSP00000371729.3"/>
    <property type="RefSeq nucleotide sequence ID" value="NM_014363.6"/>
    <property type="RefSeq protein sequence ID" value="NP_055178.3"/>
</dbReference>
<dbReference type="UCSC" id="uc001uon.3">
    <molecule id="Q9NZJ4-1"/>
    <property type="organism name" value="human"/>
</dbReference>
<dbReference type="AGR" id="HGNC:10519"/>
<dbReference type="CTD" id="26278"/>
<dbReference type="DisGeNET" id="26278"/>
<dbReference type="GeneCards" id="SACS"/>
<dbReference type="GeneReviews" id="SACS"/>
<dbReference type="HGNC" id="HGNC:10519">
    <property type="gene designation" value="SACS"/>
</dbReference>
<dbReference type="HPA" id="ENSG00000151835">
    <property type="expression patterns" value="Low tissue specificity"/>
</dbReference>
<dbReference type="MalaCards" id="SACS"/>
<dbReference type="MIM" id="270550">
    <property type="type" value="phenotype"/>
</dbReference>
<dbReference type="MIM" id="604490">
    <property type="type" value="gene"/>
</dbReference>
<dbReference type="neXtProt" id="NX_Q9NZJ4"/>
<dbReference type="OpenTargets" id="ENSG00000151835"/>
<dbReference type="Orphanet" id="98">
    <property type="disease" value="Autosomal recessive spastic ataxia of Charlevoix-Saguenay"/>
</dbReference>
<dbReference type="PharmGKB" id="PA34927"/>
<dbReference type="VEuPathDB" id="HostDB:ENSG00000151835"/>
<dbReference type="eggNOG" id="ENOG502QQPY">
    <property type="taxonomic scope" value="Eukaryota"/>
</dbReference>
<dbReference type="GeneTree" id="ENSGT00390000016695"/>
<dbReference type="HOGENOM" id="CLU_000100_0_0_1"/>
<dbReference type="InParanoid" id="Q9NZJ4"/>
<dbReference type="OMA" id="EVMNAFW"/>
<dbReference type="OrthoDB" id="1262810at2759"/>
<dbReference type="PAN-GO" id="Q9NZJ4">
    <property type="GO annotations" value="2 GO annotations based on evolutionary models"/>
</dbReference>
<dbReference type="PhylomeDB" id="Q9NZJ4"/>
<dbReference type="TreeFam" id="TF331145"/>
<dbReference type="PathwayCommons" id="Q9NZJ4"/>
<dbReference type="SignaLink" id="Q9NZJ4"/>
<dbReference type="BioGRID-ORCS" id="26278">
    <property type="hits" value="28 hits in 1158 CRISPR screens"/>
</dbReference>
<dbReference type="CD-CODE" id="FB4E32DD">
    <property type="entry name" value="Presynaptic clusters and postsynaptic densities"/>
</dbReference>
<dbReference type="ChiTaRS" id="SACS">
    <property type="organism name" value="human"/>
</dbReference>
<dbReference type="EvolutionaryTrace" id="Q9NZJ4"/>
<dbReference type="GeneWiki" id="Sacsin"/>
<dbReference type="GenomeRNAi" id="26278"/>
<dbReference type="Pharos" id="Q9NZJ4">
    <property type="development level" value="Tbio"/>
</dbReference>
<dbReference type="PRO" id="PR:Q9NZJ4"/>
<dbReference type="Proteomes" id="UP000005640">
    <property type="component" value="Chromosome 13"/>
</dbReference>
<dbReference type="RNAct" id="Q9NZJ4">
    <property type="molecule type" value="protein"/>
</dbReference>
<dbReference type="Bgee" id="ENSG00000151835">
    <property type="expression patterns" value="Expressed in Brodmann (1909) area 23 and 206 other cell types or tissues"/>
</dbReference>
<dbReference type="ExpressionAtlas" id="Q9NZJ4">
    <property type="expression patterns" value="baseline and differential"/>
</dbReference>
<dbReference type="GO" id="GO:0030424">
    <property type="term" value="C:axon"/>
    <property type="evidence" value="ECO:0000304"/>
    <property type="project" value="BHF-UCL"/>
</dbReference>
<dbReference type="GO" id="GO:0070852">
    <property type="term" value="C:cell body fiber"/>
    <property type="evidence" value="ECO:0000304"/>
    <property type="project" value="BHF-UCL"/>
</dbReference>
<dbReference type="GO" id="GO:0005737">
    <property type="term" value="C:cytoplasm"/>
    <property type="evidence" value="ECO:0000314"/>
    <property type="project" value="BHF-UCL"/>
</dbReference>
<dbReference type="GO" id="GO:0030425">
    <property type="term" value="C:dendrite"/>
    <property type="evidence" value="ECO:0000304"/>
    <property type="project" value="BHF-UCL"/>
</dbReference>
<dbReference type="GO" id="GO:0005739">
    <property type="term" value="C:mitochondrion"/>
    <property type="evidence" value="ECO:0000314"/>
    <property type="project" value="BHF-UCL"/>
</dbReference>
<dbReference type="GO" id="GO:0005634">
    <property type="term" value="C:nucleus"/>
    <property type="evidence" value="ECO:0000314"/>
    <property type="project" value="BHF-UCL"/>
</dbReference>
<dbReference type="GO" id="GO:0030544">
    <property type="term" value="F:Hsp70 protein binding"/>
    <property type="evidence" value="ECO:0000353"/>
    <property type="project" value="BHF-UCL"/>
</dbReference>
<dbReference type="GO" id="GO:0042802">
    <property type="term" value="F:identical protein binding"/>
    <property type="evidence" value="ECO:0000353"/>
    <property type="project" value="IntAct"/>
</dbReference>
<dbReference type="GO" id="GO:0050750">
    <property type="term" value="F:low-density lipoprotein particle receptor binding"/>
    <property type="evidence" value="ECO:0000314"/>
    <property type="project" value="MGI"/>
</dbReference>
<dbReference type="GO" id="GO:0070628">
    <property type="term" value="F:proteasome binding"/>
    <property type="evidence" value="ECO:0000353"/>
    <property type="project" value="BHF-UCL"/>
</dbReference>
<dbReference type="GO" id="GO:0051087">
    <property type="term" value="F:protein-folding chaperone binding"/>
    <property type="evidence" value="ECO:0000314"/>
    <property type="project" value="UniProtKB"/>
</dbReference>
<dbReference type="GO" id="GO:0090084">
    <property type="term" value="P:negative regulation of inclusion body assembly"/>
    <property type="evidence" value="ECO:0000315"/>
    <property type="project" value="BHF-UCL"/>
</dbReference>
<dbReference type="GO" id="GO:0006457">
    <property type="term" value="P:protein folding"/>
    <property type="evidence" value="ECO:0000303"/>
    <property type="project" value="UniProtKB"/>
</dbReference>
<dbReference type="CDD" id="cd17049">
    <property type="entry name" value="Ubl_Sacsin"/>
    <property type="match status" value="1"/>
</dbReference>
<dbReference type="FunFam" id="1.20.120.330:FF:000009">
    <property type="entry name" value="Sacsin molecular chaperone"/>
    <property type="match status" value="1"/>
</dbReference>
<dbReference type="Gene3D" id="1.10.287.110">
    <property type="entry name" value="DnaJ domain"/>
    <property type="match status" value="1"/>
</dbReference>
<dbReference type="Gene3D" id="1.20.120.330">
    <property type="entry name" value="Nucleotidyltransferases domain 2"/>
    <property type="match status" value="1"/>
</dbReference>
<dbReference type="Gene3D" id="3.10.20.90">
    <property type="entry name" value="Phosphatidylinositol 3-kinase Catalytic Subunit, Chain A, domain 1"/>
    <property type="match status" value="1"/>
</dbReference>
<dbReference type="InterPro" id="IPR001623">
    <property type="entry name" value="DnaJ_domain"/>
</dbReference>
<dbReference type="InterPro" id="IPR036890">
    <property type="entry name" value="HATPase_C_sf"/>
</dbReference>
<dbReference type="InterPro" id="IPR007842">
    <property type="entry name" value="HEPN_dom"/>
</dbReference>
<dbReference type="InterPro" id="IPR036869">
    <property type="entry name" value="J_dom_sf"/>
</dbReference>
<dbReference type="InterPro" id="IPR052972">
    <property type="entry name" value="Sacsin_chaperone_reg"/>
</dbReference>
<dbReference type="InterPro" id="IPR000626">
    <property type="entry name" value="Ubiquitin-like_dom"/>
</dbReference>
<dbReference type="InterPro" id="IPR029071">
    <property type="entry name" value="Ubiquitin-like_domsf"/>
</dbReference>
<dbReference type="NCBIfam" id="NF047352">
    <property type="entry name" value="P_loop_sacsin"/>
    <property type="match status" value="3"/>
</dbReference>
<dbReference type="PANTHER" id="PTHR15600">
    <property type="entry name" value="SACSIN"/>
    <property type="match status" value="1"/>
</dbReference>
<dbReference type="PANTHER" id="PTHR15600:SF42">
    <property type="entry name" value="SACSIN"/>
    <property type="match status" value="1"/>
</dbReference>
<dbReference type="Pfam" id="PF05168">
    <property type="entry name" value="HEPN"/>
    <property type="match status" value="1"/>
</dbReference>
<dbReference type="Pfam" id="PF00240">
    <property type="entry name" value="ubiquitin"/>
    <property type="match status" value="1"/>
</dbReference>
<dbReference type="SMART" id="SM00748">
    <property type="entry name" value="HEPN"/>
    <property type="match status" value="1"/>
</dbReference>
<dbReference type="SUPFAM" id="SSF55874">
    <property type="entry name" value="ATPase domain of HSP90 chaperone/DNA topoisomerase II/histidine kinase"/>
    <property type="match status" value="3"/>
</dbReference>
<dbReference type="SUPFAM" id="SSF46565">
    <property type="entry name" value="Chaperone J-domain"/>
    <property type="match status" value="1"/>
</dbReference>
<dbReference type="SUPFAM" id="SSF81593">
    <property type="entry name" value="Nucleotidyltransferase substrate binding subunit/domain"/>
    <property type="match status" value="1"/>
</dbReference>
<dbReference type="SUPFAM" id="SSF54236">
    <property type="entry name" value="Ubiquitin-like"/>
    <property type="match status" value="1"/>
</dbReference>
<dbReference type="PROSITE" id="PS50076">
    <property type="entry name" value="DNAJ_2"/>
    <property type="match status" value="1"/>
</dbReference>
<dbReference type="PROSITE" id="PS50910">
    <property type="entry name" value="HEPN"/>
    <property type="match status" value="1"/>
</dbReference>
<dbReference type="PROSITE" id="PS50053">
    <property type="entry name" value="UBIQUITIN_2"/>
    <property type="match status" value="1"/>
</dbReference>
<protein>
    <recommendedName>
        <fullName>Sacsin</fullName>
    </recommendedName>
    <alternativeName>
        <fullName>DnaJ homolog subfamily C member 29</fullName>
    </alternativeName>
</protein>
<name>SACS_HUMAN</name>